<sequence length="349" mass="37509">MSKIRVLSVDDSALMRQIMTEIINSHSDMEMVATAPDPLVARDLIKKFNPDVLTLDVEMPRMDGLDFLEKLMRLRPMPVVMVSSLTGKGSEVTLRALELGAIDFVTKPQLGIREGMLAYSEMIAEKVRTAARARIAAHKPMAAPTTLKAGPLLSSEKLIAIGASTGGTEAIRHVLQPLPLSSPAVIITQHMPPGFTRSFAERLNKLCQISVKEAEDGELVLPGHAYIAPGDKHMELARSGANYQIKIHDGPPVNRHRPSVDVLFHSVAKHAGRNAVGVILTGMGNDGAAGMLAMYQAGAWTIAQNEASCVVFGMPREAINMGGVSEVVDLSQVSQQMLAKISAGQAIRI</sequence>
<proteinExistence type="inferred from homology"/>
<keyword id="KW-0145">Chemotaxis</keyword>
<keyword id="KW-0963">Cytoplasm</keyword>
<keyword id="KW-0378">Hydrolase</keyword>
<keyword id="KW-0597">Phosphoprotein</keyword>
<comment type="function">
    <text evidence="1">Involved in chemotaxis. Part of a chemotaxis signal transduction system that modulates chemotaxis in response to various stimuli. Catalyzes the demethylation of specific methylglutamate residues introduced into the chemoreceptors (methyl-accepting chemotaxis proteins or MCP) by CheR. Also mediates the irreversible deamidation of specific glutamine residues to glutamic acid.</text>
</comment>
<comment type="catalytic activity">
    <reaction evidence="1">
        <text>[protein]-L-glutamate 5-O-methyl ester + H2O = L-glutamyl-[protein] + methanol + H(+)</text>
        <dbReference type="Rhea" id="RHEA:23236"/>
        <dbReference type="Rhea" id="RHEA-COMP:10208"/>
        <dbReference type="Rhea" id="RHEA-COMP:10311"/>
        <dbReference type="ChEBI" id="CHEBI:15377"/>
        <dbReference type="ChEBI" id="CHEBI:15378"/>
        <dbReference type="ChEBI" id="CHEBI:17790"/>
        <dbReference type="ChEBI" id="CHEBI:29973"/>
        <dbReference type="ChEBI" id="CHEBI:82795"/>
        <dbReference type="EC" id="3.1.1.61"/>
    </reaction>
</comment>
<comment type="catalytic activity">
    <reaction evidence="1">
        <text>L-glutaminyl-[protein] + H2O = L-glutamyl-[protein] + NH4(+)</text>
        <dbReference type="Rhea" id="RHEA:16441"/>
        <dbReference type="Rhea" id="RHEA-COMP:10207"/>
        <dbReference type="Rhea" id="RHEA-COMP:10208"/>
        <dbReference type="ChEBI" id="CHEBI:15377"/>
        <dbReference type="ChEBI" id="CHEBI:28938"/>
        <dbReference type="ChEBI" id="CHEBI:29973"/>
        <dbReference type="ChEBI" id="CHEBI:30011"/>
        <dbReference type="EC" id="3.5.1.44"/>
    </reaction>
</comment>
<comment type="subcellular location">
    <subcellularLocation>
        <location evidence="1">Cytoplasm</location>
    </subcellularLocation>
</comment>
<comment type="domain">
    <text evidence="1">Contains a C-terminal catalytic domain, and an N-terminal region which modulates catalytic activity.</text>
</comment>
<comment type="PTM">
    <text evidence="1">Phosphorylated by CheA. Phosphorylation of the N-terminal regulatory domain activates the methylesterase activity.</text>
</comment>
<comment type="similarity">
    <text evidence="1">Belongs to the CheB family.</text>
</comment>
<accession>Q8Z5V2</accession>
<protein>
    <recommendedName>
        <fullName evidence="1">Protein-glutamate methylesterase/protein-glutamine glutaminase</fullName>
        <ecNumber evidence="1">3.1.1.61</ecNumber>
        <ecNumber evidence="1">3.5.1.44</ecNumber>
    </recommendedName>
</protein>
<dbReference type="EC" id="3.1.1.61" evidence="1"/>
<dbReference type="EC" id="3.5.1.44" evidence="1"/>
<dbReference type="EMBL" id="AL513382">
    <property type="protein sequence ID" value="CAD05668.1"/>
    <property type="molecule type" value="Genomic_DNA"/>
</dbReference>
<dbReference type="EMBL" id="AE014613">
    <property type="protein sequence ID" value="AAO68633.1"/>
    <property type="molecule type" value="Genomic_DNA"/>
</dbReference>
<dbReference type="RefSeq" id="NP_456483.1">
    <property type="nucleotide sequence ID" value="NC_003198.1"/>
</dbReference>
<dbReference type="SMR" id="Q8Z5V2"/>
<dbReference type="STRING" id="220341.gene:17586033"/>
<dbReference type="KEGG" id="stt:t0960"/>
<dbReference type="KEGG" id="sty:STY2126"/>
<dbReference type="PATRIC" id="fig|220341.7.peg.2137"/>
<dbReference type="eggNOG" id="COG2201">
    <property type="taxonomic scope" value="Bacteria"/>
</dbReference>
<dbReference type="HOGENOM" id="CLU_000445_51_0_6"/>
<dbReference type="OMA" id="MLEMHRA"/>
<dbReference type="Proteomes" id="UP000000541">
    <property type="component" value="Chromosome"/>
</dbReference>
<dbReference type="Proteomes" id="UP000002670">
    <property type="component" value="Chromosome"/>
</dbReference>
<dbReference type="GO" id="GO:0005737">
    <property type="term" value="C:cytoplasm"/>
    <property type="evidence" value="ECO:0007669"/>
    <property type="project" value="UniProtKB-SubCell"/>
</dbReference>
<dbReference type="GO" id="GO:0000156">
    <property type="term" value="F:phosphorelay response regulator activity"/>
    <property type="evidence" value="ECO:0007669"/>
    <property type="project" value="InterPro"/>
</dbReference>
<dbReference type="GO" id="GO:0008984">
    <property type="term" value="F:protein-glutamate methylesterase activity"/>
    <property type="evidence" value="ECO:0007669"/>
    <property type="project" value="UniProtKB-UniRule"/>
</dbReference>
<dbReference type="GO" id="GO:0050568">
    <property type="term" value="F:protein-glutamine glutaminase activity"/>
    <property type="evidence" value="ECO:0007669"/>
    <property type="project" value="UniProtKB-UniRule"/>
</dbReference>
<dbReference type="GO" id="GO:0006935">
    <property type="term" value="P:chemotaxis"/>
    <property type="evidence" value="ECO:0007669"/>
    <property type="project" value="UniProtKB-UniRule"/>
</dbReference>
<dbReference type="CDD" id="cd16351">
    <property type="entry name" value="CheB_like"/>
    <property type="match status" value="1"/>
</dbReference>
<dbReference type="CDD" id="cd17541">
    <property type="entry name" value="REC_CheB-like"/>
    <property type="match status" value="1"/>
</dbReference>
<dbReference type="FunFam" id="3.40.50.180:FF:000001">
    <property type="entry name" value="Protein-glutamate methylesterase/protein-glutamine glutaminase"/>
    <property type="match status" value="1"/>
</dbReference>
<dbReference type="FunFam" id="3.40.50.2300:FF:000060">
    <property type="entry name" value="Protein-glutamate methylesterase/protein-glutamine glutaminase"/>
    <property type="match status" value="1"/>
</dbReference>
<dbReference type="Gene3D" id="3.40.50.2300">
    <property type="match status" value="1"/>
</dbReference>
<dbReference type="Gene3D" id="3.40.50.180">
    <property type="entry name" value="Methylesterase CheB, C-terminal domain"/>
    <property type="match status" value="1"/>
</dbReference>
<dbReference type="HAMAP" id="MF_00099">
    <property type="entry name" value="CheB_chemtxs"/>
    <property type="match status" value="1"/>
</dbReference>
<dbReference type="InterPro" id="IPR008248">
    <property type="entry name" value="CheB-like"/>
</dbReference>
<dbReference type="InterPro" id="IPR035909">
    <property type="entry name" value="CheB_C"/>
</dbReference>
<dbReference type="InterPro" id="IPR011006">
    <property type="entry name" value="CheY-like_superfamily"/>
</dbReference>
<dbReference type="InterPro" id="IPR000673">
    <property type="entry name" value="Sig_transdc_resp-reg_Me-estase"/>
</dbReference>
<dbReference type="InterPro" id="IPR001789">
    <property type="entry name" value="Sig_transdc_resp-reg_receiver"/>
</dbReference>
<dbReference type="NCBIfam" id="NF001965">
    <property type="entry name" value="PRK00742.1"/>
    <property type="match status" value="1"/>
</dbReference>
<dbReference type="NCBIfam" id="NF009206">
    <property type="entry name" value="PRK12555.1"/>
    <property type="match status" value="1"/>
</dbReference>
<dbReference type="PANTHER" id="PTHR42872">
    <property type="entry name" value="PROTEIN-GLUTAMATE METHYLESTERASE/PROTEIN-GLUTAMINE GLUTAMINASE"/>
    <property type="match status" value="1"/>
</dbReference>
<dbReference type="PANTHER" id="PTHR42872:SF6">
    <property type="entry name" value="PROTEIN-GLUTAMATE METHYLESTERASE_PROTEIN-GLUTAMINE GLUTAMINASE"/>
    <property type="match status" value="1"/>
</dbReference>
<dbReference type="Pfam" id="PF01339">
    <property type="entry name" value="CheB_methylest"/>
    <property type="match status" value="1"/>
</dbReference>
<dbReference type="Pfam" id="PF00072">
    <property type="entry name" value="Response_reg"/>
    <property type="match status" value="1"/>
</dbReference>
<dbReference type="PIRSF" id="PIRSF000876">
    <property type="entry name" value="RR_chemtxs_CheB"/>
    <property type="match status" value="1"/>
</dbReference>
<dbReference type="SMART" id="SM00448">
    <property type="entry name" value="REC"/>
    <property type="match status" value="1"/>
</dbReference>
<dbReference type="SUPFAM" id="SSF52172">
    <property type="entry name" value="CheY-like"/>
    <property type="match status" value="1"/>
</dbReference>
<dbReference type="SUPFAM" id="SSF52738">
    <property type="entry name" value="Methylesterase CheB, C-terminal domain"/>
    <property type="match status" value="1"/>
</dbReference>
<dbReference type="PROSITE" id="PS50122">
    <property type="entry name" value="CHEB"/>
    <property type="match status" value="1"/>
</dbReference>
<dbReference type="PROSITE" id="PS50110">
    <property type="entry name" value="RESPONSE_REGULATORY"/>
    <property type="match status" value="1"/>
</dbReference>
<name>CHEB_SALTI</name>
<evidence type="ECO:0000255" key="1">
    <source>
        <dbReference type="HAMAP-Rule" id="MF_00099"/>
    </source>
</evidence>
<evidence type="ECO:0000305" key="2"/>
<gene>
    <name evidence="1" type="primary">cheB</name>
    <name type="ordered locus">STY2126</name>
    <name type="ordered locus">t0960</name>
</gene>
<reference key="1">
    <citation type="journal article" date="2001" name="Nature">
        <title>Complete genome sequence of a multiple drug resistant Salmonella enterica serovar Typhi CT18.</title>
        <authorList>
            <person name="Parkhill J."/>
            <person name="Dougan G."/>
            <person name="James K.D."/>
            <person name="Thomson N.R."/>
            <person name="Pickard D."/>
            <person name="Wain J."/>
            <person name="Churcher C.M."/>
            <person name="Mungall K.L."/>
            <person name="Bentley S.D."/>
            <person name="Holden M.T.G."/>
            <person name="Sebaihia M."/>
            <person name="Baker S."/>
            <person name="Basham D."/>
            <person name="Brooks K."/>
            <person name="Chillingworth T."/>
            <person name="Connerton P."/>
            <person name="Cronin A."/>
            <person name="Davis P."/>
            <person name="Davies R.M."/>
            <person name="Dowd L."/>
            <person name="White N."/>
            <person name="Farrar J."/>
            <person name="Feltwell T."/>
            <person name="Hamlin N."/>
            <person name="Haque A."/>
            <person name="Hien T.T."/>
            <person name="Holroyd S."/>
            <person name="Jagels K."/>
            <person name="Krogh A."/>
            <person name="Larsen T.S."/>
            <person name="Leather S."/>
            <person name="Moule S."/>
            <person name="O'Gaora P."/>
            <person name="Parry C."/>
            <person name="Quail M.A."/>
            <person name="Rutherford K.M."/>
            <person name="Simmonds M."/>
            <person name="Skelton J."/>
            <person name="Stevens K."/>
            <person name="Whitehead S."/>
            <person name="Barrell B.G."/>
        </authorList>
    </citation>
    <scope>NUCLEOTIDE SEQUENCE [LARGE SCALE GENOMIC DNA]</scope>
    <source>
        <strain>CT18</strain>
    </source>
</reference>
<reference key="2">
    <citation type="journal article" date="2003" name="J. Bacteriol.">
        <title>Comparative genomics of Salmonella enterica serovar Typhi strains Ty2 and CT18.</title>
        <authorList>
            <person name="Deng W."/>
            <person name="Liou S.-R."/>
            <person name="Plunkett G. III"/>
            <person name="Mayhew G.F."/>
            <person name="Rose D.J."/>
            <person name="Burland V."/>
            <person name="Kodoyianni V."/>
            <person name="Schwartz D.C."/>
            <person name="Blattner F.R."/>
        </authorList>
    </citation>
    <scope>NUCLEOTIDE SEQUENCE [LARGE SCALE GENOMIC DNA]</scope>
    <source>
        <strain>ATCC 700931 / Ty2</strain>
    </source>
</reference>
<organism>
    <name type="scientific">Salmonella typhi</name>
    <dbReference type="NCBI Taxonomy" id="90370"/>
    <lineage>
        <taxon>Bacteria</taxon>
        <taxon>Pseudomonadati</taxon>
        <taxon>Pseudomonadota</taxon>
        <taxon>Gammaproteobacteria</taxon>
        <taxon>Enterobacterales</taxon>
        <taxon>Enterobacteriaceae</taxon>
        <taxon>Salmonella</taxon>
    </lineage>
</organism>
<feature type="chain" id="PRO_0000158026" description="Protein-glutamate methylesterase/protein-glutamine glutaminase">
    <location>
        <begin position="1"/>
        <end position="349"/>
    </location>
</feature>
<feature type="domain" description="Response regulatory" evidence="1">
    <location>
        <begin position="5"/>
        <end position="122"/>
    </location>
</feature>
<feature type="domain" description="CheB-type methylesterase" evidence="1">
    <location>
        <begin position="152"/>
        <end position="344"/>
    </location>
</feature>
<feature type="active site" evidence="1">
    <location>
        <position position="164"/>
    </location>
</feature>
<feature type="active site" evidence="1">
    <location>
        <position position="190"/>
    </location>
</feature>
<feature type="active site" evidence="1">
    <location>
        <position position="286"/>
    </location>
</feature>
<feature type="modified residue" description="4-aspartylphosphate" evidence="1">
    <location>
        <position position="56"/>
    </location>
</feature>
<feature type="sequence conflict" description="In Ref. 2; AAO68633." evidence="2" ref="2">
    <original>L</original>
    <variation>R</variation>
    <location>
        <position position="219"/>
    </location>
</feature>